<dbReference type="EMBL" id="CP000821">
    <property type="protein sequence ID" value="ABV38963.1"/>
    <property type="molecule type" value="Genomic_DNA"/>
</dbReference>
<dbReference type="RefSeq" id="WP_012144690.1">
    <property type="nucleotide sequence ID" value="NC_009831.1"/>
</dbReference>
<dbReference type="SMR" id="A8G1J0"/>
<dbReference type="STRING" id="425104.Ssed_4361"/>
<dbReference type="KEGG" id="sse:Ssed_4361"/>
<dbReference type="eggNOG" id="COG1281">
    <property type="taxonomic scope" value="Bacteria"/>
</dbReference>
<dbReference type="HOGENOM" id="CLU_054493_0_0_6"/>
<dbReference type="OrthoDB" id="9793753at2"/>
<dbReference type="Proteomes" id="UP000002015">
    <property type="component" value="Chromosome"/>
</dbReference>
<dbReference type="GO" id="GO:0005737">
    <property type="term" value="C:cytoplasm"/>
    <property type="evidence" value="ECO:0007669"/>
    <property type="project" value="UniProtKB-SubCell"/>
</dbReference>
<dbReference type="GO" id="GO:0044183">
    <property type="term" value="F:protein folding chaperone"/>
    <property type="evidence" value="ECO:0007669"/>
    <property type="project" value="TreeGrafter"/>
</dbReference>
<dbReference type="GO" id="GO:0051082">
    <property type="term" value="F:unfolded protein binding"/>
    <property type="evidence" value="ECO:0007669"/>
    <property type="project" value="UniProtKB-UniRule"/>
</dbReference>
<dbReference type="GO" id="GO:0042026">
    <property type="term" value="P:protein refolding"/>
    <property type="evidence" value="ECO:0007669"/>
    <property type="project" value="TreeGrafter"/>
</dbReference>
<dbReference type="CDD" id="cd00498">
    <property type="entry name" value="Hsp33"/>
    <property type="match status" value="1"/>
</dbReference>
<dbReference type="Gene3D" id="1.10.287.480">
    <property type="entry name" value="helix hairpin bin"/>
    <property type="match status" value="1"/>
</dbReference>
<dbReference type="Gene3D" id="3.55.30.10">
    <property type="entry name" value="Hsp33 domain"/>
    <property type="match status" value="1"/>
</dbReference>
<dbReference type="Gene3D" id="3.90.1280.10">
    <property type="entry name" value="HSP33 redox switch-like"/>
    <property type="match status" value="1"/>
</dbReference>
<dbReference type="HAMAP" id="MF_00117">
    <property type="entry name" value="HslO"/>
    <property type="match status" value="1"/>
</dbReference>
<dbReference type="InterPro" id="IPR000397">
    <property type="entry name" value="Heat_shock_Hsp33"/>
</dbReference>
<dbReference type="InterPro" id="IPR016154">
    <property type="entry name" value="Heat_shock_Hsp33_C"/>
</dbReference>
<dbReference type="InterPro" id="IPR016153">
    <property type="entry name" value="Heat_shock_Hsp33_N"/>
</dbReference>
<dbReference type="InterPro" id="IPR023212">
    <property type="entry name" value="Hsp33_helix_hairpin_bin_dom_sf"/>
</dbReference>
<dbReference type="NCBIfam" id="NF001033">
    <property type="entry name" value="PRK00114.1"/>
    <property type="match status" value="1"/>
</dbReference>
<dbReference type="PANTHER" id="PTHR30111">
    <property type="entry name" value="33 KDA CHAPERONIN"/>
    <property type="match status" value="1"/>
</dbReference>
<dbReference type="PANTHER" id="PTHR30111:SF1">
    <property type="entry name" value="33 KDA CHAPERONIN"/>
    <property type="match status" value="1"/>
</dbReference>
<dbReference type="Pfam" id="PF01430">
    <property type="entry name" value="HSP33"/>
    <property type="match status" value="1"/>
</dbReference>
<dbReference type="PIRSF" id="PIRSF005261">
    <property type="entry name" value="Heat_shock_Hsp33"/>
    <property type="match status" value="1"/>
</dbReference>
<dbReference type="SUPFAM" id="SSF64397">
    <property type="entry name" value="Hsp33 domain"/>
    <property type="match status" value="1"/>
</dbReference>
<dbReference type="SUPFAM" id="SSF118352">
    <property type="entry name" value="HSP33 redox switch-like"/>
    <property type="match status" value="1"/>
</dbReference>
<proteinExistence type="inferred from homology"/>
<comment type="function">
    <text evidence="1">Redox regulated molecular chaperone. Protects both thermally unfolding and oxidatively damaged proteins from irreversible aggregation. Plays an important role in the bacterial defense system toward oxidative stress.</text>
</comment>
<comment type="subcellular location">
    <subcellularLocation>
        <location evidence="1">Cytoplasm</location>
    </subcellularLocation>
</comment>
<comment type="PTM">
    <text evidence="1">Under oxidizing conditions two disulfide bonds are formed involving the reactive cysteines. Under reducing conditions zinc is bound to the reactive cysteines and the protein is inactive.</text>
</comment>
<comment type="similarity">
    <text evidence="1">Belongs to the HSP33 family.</text>
</comment>
<accession>A8G1J0</accession>
<organism>
    <name type="scientific">Shewanella sediminis (strain HAW-EB3)</name>
    <dbReference type="NCBI Taxonomy" id="425104"/>
    <lineage>
        <taxon>Bacteria</taxon>
        <taxon>Pseudomonadati</taxon>
        <taxon>Pseudomonadota</taxon>
        <taxon>Gammaproteobacteria</taxon>
        <taxon>Alteromonadales</taxon>
        <taxon>Shewanellaceae</taxon>
        <taxon>Shewanella</taxon>
    </lineage>
</organism>
<reference key="1">
    <citation type="submission" date="2007-08" db="EMBL/GenBank/DDBJ databases">
        <title>Complete sequence of Shewanella sediminis HAW-EB3.</title>
        <authorList>
            <consortium name="US DOE Joint Genome Institute"/>
            <person name="Copeland A."/>
            <person name="Lucas S."/>
            <person name="Lapidus A."/>
            <person name="Barry K."/>
            <person name="Glavina del Rio T."/>
            <person name="Dalin E."/>
            <person name="Tice H."/>
            <person name="Pitluck S."/>
            <person name="Chertkov O."/>
            <person name="Brettin T."/>
            <person name="Bruce D."/>
            <person name="Detter J.C."/>
            <person name="Han C."/>
            <person name="Schmutz J."/>
            <person name="Larimer F."/>
            <person name="Land M."/>
            <person name="Hauser L."/>
            <person name="Kyrpides N."/>
            <person name="Kim E."/>
            <person name="Zhao J.-S."/>
            <person name="Richardson P."/>
        </authorList>
    </citation>
    <scope>NUCLEOTIDE SEQUENCE [LARGE SCALE GENOMIC DNA]</scope>
    <source>
        <strain>HAW-EB3</strain>
    </source>
</reference>
<evidence type="ECO:0000255" key="1">
    <source>
        <dbReference type="HAMAP-Rule" id="MF_00117"/>
    </source>
</evidence>
<gene>
    <name evidence="1" type="primary">hslO</name>
    <name type="ordered locus">Ssed_4361</name>
</gene>
<name>HSLO_SHESH</name>
<feature type="chain" id="PRO_1000076086" description="33 kDa chaperonin">
    <location>
        <begin position="1"/>
        <end position="286"/>
    </location>
</feature>
<feature type="disulfide bond" description="Redox-active" evidence="1">
    <location>
        <begin position="225"/>
        <end position="227"/>
    </location>
</feature>
<feature type="disulfide bond" description="Redox-active" evidence="1">
    <location>
        <begin position="258"/>
        <end position="261"/>
    </location>
</feature>
<keyword id="KW-0143">Chaperone</keyword>
<keyword id="KW-0963">Cytoplasm</keyword>
<keyword id="KW-1015">Disulfide bond</keyword>
<keyword id="KW-0676">Redox-active center</keyword>
<keyword id="KW-1185">Reference proteome</keyword>
<keyword id="KW-0862">Zinc</keyword>
<sequence>MSKDNLHRYLFENADVRGELVQLEQSYQEILSAHTYPTQIQELLGELMAATSLLTATLKFSGDISVQLQGDGPISLAVINGNNLQQLRGVARWDGELSDGATLQQLFGKGHMVITLTPAKGERYQGVVALDKDSLAACLEEYFTQSEQLPTKISLFANGKQAAGMLLQVLPSEGDHNAEFEHLEQLTATVKAEELFELEAEEVLHRLYHQEEVRLFDPIEVTFSCTCSRERSASAIRTVSKAEIDTIIAEQGKIEMGCEYCNTTYDFDSIDVEAIFSNTQAPETKQ</sequence>
<protein>
    <recommendedName>
        <fullName evidence="1">33 kDa chaperonin</fullName>
    </recommendedName>
    <alternativeName>
        <fullName evidence="1">Heat shock protein 33 homolog</fullName>
        <shortName evidence="1">HSP33</shortName>
    </alternativeName>
</protein>